<gene>
    <name evidence="1" type="primary">rnhC</name>
    <name type="ordered locus">ATP_00130</name>
</gene>
<feature type="chain" id="PRO_1000117702" description="Ribonuclease HIII">
    <location>
        <begin position="1"/>
        <end position="288"/>
    </location>
</feature>
<feature type="domain" description="RNase H type-2" evidence="2">
    <location>
        <begin position="76"/>
        <end position="288"/>
    </location>
</feature>
<feature type="binding site" evidence="1">
    <location>
        <position position="82"/>
    </location>
    <ligand>
        <name>a divalent metal cation</name>
        <dbReference type="ChEBI" id="CHEBI:60240"/>
    </ligand>
</feature>
<feature type="binding site" evidence="1">
    <location>
        <position position="83"/>
    </location>
    <ligand>
        <name>a divalent metal cation</name>
        <dbReference type="ChEBI" id="CHEBI:60240"/>
    </ligand>
</feature>
<feature type="binding site" evidence="1">
    <location>
        <position position="185"/>
    </location>
    <ligand>
        <name>a divalent metal cation</name>
        <dbReference type="ChEBI" id="CHEBI:60240"/>
    </ligand>
</feature>
<sequence>MKNYSFTFDIPQLRKLKKIYKSFLIEKEINNNSIYFFLKKDNIQMIAYNNGTFFIKGENIQEEILNIKEILNIKDYSAIGSDEVGTGDVFGSIVVCSSYVSAENIPFLENLNIKDSKKLTDEKIIQLVPKIINKITYSLISINPYKYNILTNKGFNLNKIKAILHNDMILKNLIKIKKNVNVILDKFTSSKNYFNYLKNEKKVYKKIFFCNKAEKVHISVAAASIIARYAFLKNIFALSKKIGINLKLGASTEVDKQINFIYKKYGMNILKKIAKCNFKNITKQFIKN</sequence>
<keyword id="KW-0963">Cytoplasm</keyword>
<keyword id="KW-0255">Endonuclease</keyword>
<keyword id="KW-0378">Hydrolase</keyword>
<keyword id="KW-0460">Magnesium</keyword>
<keyword id="KW-0479">Metal-binding</keyword>
<keyword id="KW-0540">Nuclease</keyword>
<keyword id="KW-1185">Reference proteome</keyword>
<protein>
    <recommendedName>
        <fullName evidence="1">Ribonuclease HIII</fullName>
        <shortName evidence="1">RNase HIII</shortName>
        <ecNumber evidence="1">3.1.26.4</ecNumber>
    </recommendedName>
</protein>
<proteinExistence type="inferred from homology"/>
<organism>
    <name type="scientific">Phytoplasma mali (strain AT)</name>
    <dbReference type="NCBI Taxonomy" id="482235"/>
    <lineage>
        <taxon>Bacteria</taxon>
        <taxon>Bacillati</taxon>
        <taxon>Mycoplasmatota</taxon>
        <taxon>Mollicutes</taxon>
        <taxon>Acholeplasmatales</taxon>
        <taxon>Acholeplasmataceae</taxon>
        <taxon>Candidatus Phytoplasma</taxon>
        <taxon>16SrX (Apple proliferation group)</taxon>
    </lineage>
</organism>
<comment type="function">
    <text evidence="1">Endonuclease that specifically degrades the RNA of RNA-DNA hybrids.</text>
</comment>
<comment type="catalytic activity">
    <reaction evidence="1">
        <text>Endonucleolytic cleavage to 5'-phosphomonoester.</text>
        <dbReference type="EC" id="3.1.26.4"/>
    </reaction>
</comment>
<comment type="cofactor">
    <cofactor evidence="1">
        <name>Mn(2+)</name>
        <dbReference type="ChEBI" id="CHEBI:29035"/>
    </cofactor>
    <cofactor evidence="1">
        <name>Mg(2+)</name>
        <dbReference type="ChEBI" id="CHEBI:18420"/>
    </cofactor>
    <text evidence="1">Manganese or magnesium. Binds 1 divalent metal ion per monomer in the absence of substrate. May bind a second metal ion after substrate binding.</text>
</comment>
<comment type="subcellular location">
    <subcellularLocation>
        <location evidence="1">Cytoplasm</location>
    </subcellularLocation>
</comment>
<comment type="similarity">
    <text evidence="1">Belongs to the RNase HII family. RnhC subfamily.</text>
</comment>
<evidence type="ECO:0000255" key="1">
    <source>
        <dbReference type="HAMAP-Rule" id="MF_00053"/>
    </source>
</evidence>
<evidence type="ECO:0000255" key="2">
    <source>
        <dbReference type="PROSITE-ProRule" id="PRU01319"/>
    </source>
</evidence>
<name>RNH3_PHYMT</name>
<reference key="1">
    <citation type="journal article" date="2008" name="BMC Genomics">
        <title>The linear chromosome of the plant-pathogenic mycoplasma 'Candidatus Phytoplasma mali'.</title>
        <authorList>
            <person name="Kube M."/>
            <person name="Schneider B."/>
            <person name="Kuhl H."/>
            <person name="Dandekar T."/>
            <person name="Heitmann K."/>
            <person name="Migdoll A.M."/>
            <person name="Reinhardt R."/>
            <person name="Seemueller E."/>
        </authorList>
    </citation>
    <scope>NUCLEOTIDE SEQUENCE [LARGE SCALE GENOMIC DNA]</scope>
    <source>
        <strain>AT</strain>
    </source>
</reference>
<accession>B3R0F3</accession>
<dbReference type="EC" id="3.1.26.4" evidence="1"/>
<dbReference type="EMBL" id="CU469464">
    <property type="protein sequence ID" value="CAP18317.1"/>
    <property type="molecule type" value="Genomic_DNA"/>
</dbReference>
<dbReference type="SMR" id="B3R0F3"/>
<dbReference type="STRING" id="37692.ATP_00130"/>
<dbReference type="KEGG" id="pml:ATP_00130"/>
<dbReference type="eggNOG" id="COG1039">
    <property type="taxonomic scope" value="Bacteria"/>
</dbReference>
<dbReference type="HOGENOM" id="CLU_059546_1_0_14"/>
<dbReference type="Proteomes" id="UP000002020">
    <property type="component" value="Chromosome"/>
</dbReference>
<dbReference type="GO" id="GO:0005737">
    <property type="term" value="C:cytoplasm"/>
    <property type="evidence" value="ECO:0007669"/>
    <property type="project" value="UniProtKB-SubCell"/>
</dbReference>
<dbReference type="GO" id="GO:0032299">
    <property type="term" value="C:ribonuclease H2 complex"/>
    <property type="evidence" value="ECO:0007669"/>
    <property type="project" value="TreeGrafter"/>
</dbReference>
<dbReference type="GO" id="GO:0000287">
    <property type="term" value="F:magnesium ion binding"/>
    <property type="evidence" value="ECO:0007669"/>
    <property type="project" value="UniProtKB-UniRule"/>
</dbReference>
<dbReference type="GO" id="GO:0003723">
    <property type="term" value="F:RNA binding"/>
    <property type="evidence" value="ECO:0007669"/>
    <property type="project" value="InterPro"/>
</dbReference>
<dbReference type="GO" id="GO:0004523">
    <property type="term" value="F:RNA-DNA hybrid ribonuclease activity"/>
    <property type="evidence" value="ECO:0007669"/>
    <property type="project" value="UniProtKB-UniRule"/>
</dbReference>
<dbReference type="GO" id="GO:0043137">
    <property type="term" value="P:DNA replication, removal of RNA primer"/>
    <property type="evidence" value="ECO:0007669"/>
    <property type="project" value="TreeGrafter"/>
</dbReference>
<dbReference type="GO" id="GO:0006298">
    <property type="term" value="P:mismatch repair"/>
    <property type="evidence" value="ECO:0007669"/>
    <property type="project" value="TreeGrafter"/>
</dbReference>
<dbReference type="CDD" id="cd06590">
    <property type="entry name" value="RNase_HII_bacteria_HIII_like"/>
    <property type="match status" value="1"/>
</dbReference>
<dbReference type="FunFam" id="3.30.420.10:FF:000047">
    <property type="entry name" value="Ribonuclease HIII"/>
    <property type="match status" value="1"/>
</dbReference>
<dbReference type="Gene3D" id="3.30.420.10">
    <property type="entry name" value="Ribonuclease H-like superfamily/Ribonuclease H"/>
    <property type="match status" value="1"/>
</dbReference>
<dbReference type="Gene3D" id="3.30.310.10">
    <property type="entry name" value="TATA-Binding Protein"/>
    <property type="match status" value="1"/>
</dbReference>
<dbReference type="HAMAP" id="MF_00053">
    <property type="entry name" value="RNase_HIII"/>
    <property type="match status" value="1"/>
</dbReference>
<dbReference type="InterPro" id="IPR001352">
    <property type="entry name" value="RNase_HII/HIII"/>
</dbReference>
<dbReference type="InterPro" id="IPR024567">
    <property type="entry name" value="RNase_HII/HIII_dom"/>
</dbReference>
<dbReference type="InterPro" id="IPR004641">
    <property type="entry name" value="RNase_HIII"/>
</dbReference>
<dbReference type="InterPro" id="IPR012337">
    <property type="entry name" value="RNaseH-like_sf"/>
</dbReference>
<dbReference type="InterPro" id="IPR036397">
    <property type="entry name" value="RNaseH_sf"/>
</dbReference>
<dbReference type="InterPro" id="IPR012295">
    <property type="entry name" value="TBP_dom_sf"/>
</dbReference>
<dbReference type="NCBIfam" id="TIGR00716">
    <property type="entry name" value="rnhC"/>
    <property type="match status" value="1"/>
</dbReference>
<dbReference type="PANTHER" id="PTHR10954:SF23">
    <property type="entry name" value="RIBONUCLEASE"/>
    <property type="match status" value="1"/>
</dbReference>
<dbReference type="PANTHER" id="PTHR10954">
    <property type="entry name" value="RIBONUCLEASE H2 SUBUNIT A"/>
    <property type="match status" value="1"/>
</dbReference>
<dbReference type="Pfam" id="PF01351">
    <property type="entry name" value="RNase_HII"/>
    <property type="match status" value="1"/>
</dbReference>
<dbReference type="PIRSF" id="PIRSF037748">
    <property type="entry name" value="RnhC"/>
    <property type="match status" value="1"/>
</dbReference>
<dbReference type="SUPFAM" id="SSF53098">
    <property type="entry name" value="Ribonuclease H-like"/>
    <property type="match status" value="1"/>
</dbReference>
<dbReference type="PROSITE" id="PS51975">
    <property type="entry name" value="RNASE_H_2"/>
    <property type="match status" value="1"/>
</dbReference>